<keyword id="KW-0027">Amidation</keyword>
<keyword id="KW-0165">Cleavage on pair of basic residues</keyword>
<keyword id="KW-0472">Membrane</keyword>
<keyword id="KW-0964">Secreted</keyword>
<keyword id="KW-0732">Signal</keyword>
<keyword id="KW-1052">Target cell membrane</keyword>
<keyword id="KW-1053">Target membrane</keyword>
<evidence type="ECO:0000250" key="1">
    <source>
        <dbReference type="UniProtKB" id="P31107"/>
    </source>
</evidence>
<evidence type="ECO:0000255" key="2"/>
<evidence type="ECO:0000256" key="3">
    <source>
        <dbReference type="SAM" id="MobiDB-lite"/>
    </source>
</evidence>
<evidence type="ECO:0000269" key="4">
    <source>
    </source>
</evidence>
<evidence type="ECO:0000269" key="5">
    <source>
    </source>
</evidence>
<evidence type="ECO:0000303" key="6">
    <source>
    </source>
</evidence>
<evidence type="ECO:0000305" key="7"/>
<evidence type="ECO:0000305" key="8">
    <source>
    </source>
</evidence>
<evidence type="ECO:0000305" key="9">
    <source>
    </source>
</evidence>
<proteinExistence type="evidence at protein level"/>
<name>DRS5_AGASP</name>
<accession>A0A5P9K5G4</accession>
<protein>
    <recommendedName>
        <fullName evidence="6">Dermaseptin-SP5</fullName>
        <shortName evidence="6">DRS-SP5</shortName>
    </recommendedName>
</protein>
<dbReference type="EMBL" id="MK532483">
    <property type="protein sequence ID" value="QFU19633.1"/>
    <property type="molecule type" value="mRNA"/>
</dbReference>
<dbReference type="GO" id="GO:0005576">
    <property type="term" value="C:extracellular region"/>
    <property type="evidence" value="ECO:0007669"/>
    <property type="project" value="UniProtKB-SubCell"/>
</dbReference>
<dbReference type="GO" id="GO:0016020">
    <property type="term" value="C:membrane"/>
    <property type="evidence" value="ECO:0007669"/>
    <property type="project" value="UniProtKB-KW"/>
</dbReference>
<dbReference type="GO" id="GO:0044218">
    <property type="term" value="C:other organism cell membrane"/>
    <property type="evidence" value="ECO:0007669"/>
    <property type="project" value="UniProtKB-KW"/>
</dbReference>
<dbReference type="InterPro" id="IPR022731">
    <property type="entry name" value="Dermaseptin_dom"/>
</dbReference>
<dbReference type="InterPro" id="IPR004275">
    <property type="entry name" value="Frog_antimicrobial_propeptide"/>
</dbReference>
<dbReference type="InterPro" id="IPR016322">
    <property type="entry name" value="FSAP"/>
</dbReference>
<dbReference type="Pfam" id="PF12121">
    <property type="entry name" value="DD_K"/>
    <property type="match status" value="1"/>
</dbReference>
<dbReference type="Pfam" id="PF03032">
    <property type="entry name" value="FSAP_sig_propep"/>
    <property type="match status" value="1"/>
</dbReference>
<dbReference type="PIRSF" id="PIRSF001822">
    <property type="entry name" value="Dermaseptin_precursor"/>
    <property type="match status" value="1"/>
</dbReference>
<reference key="1">
    <citation type="journal article" date="2019" name="Biomolecules">
        <title>Unravelling the skin secretion peptides of the gliding leaf frog, Agalychnis spurrelli (Hylidae).</title>
        <authorList>
            <person name="Proano-Bolanos C."/>
            <person name="Blasco-Zuniga A."/>
            <person name="Almeida J.R."/>
            <person name="Wang L."/>
            <person name="Llumiquinga M.A."/>
            <person name="Rivera M."/>
            <person name="Zhou M."/>
            <person name="Chen T."/>
            <person name="Shaw C."/>
        </authorList>
    </citation>
    <scope>NUCLEOTIDE SEQUENCE [MRNA]</scope>
    <scope>FUNCTION</scope>
    <scope>IDENTIFICATION BY MASS SPECTROMETRY</scope>
    <scope>SYNTHESIS OF 46-72</scope>
    <scope>SUBCELLULAR LOCATION</scope>
    <scope>AMIDATION AT PRO-72</scope>
    <source>
        <tissue>Skin secretion</tissue>
    </source>
</reference>
<reference key="2">
    <citation type="journal article" date="2019" name="J. Mol. Model.">
        <title>Molecular modeling of four dermaseptin-related peptides of the gliding tree frog Agalychnis spurrelli.</title>
        <authorList>
            <person name="Cuesta S."/>
            <person name="Gallegos F."/>
            <person name="Arias J."/>
            <person name="Pilaquinga F."/>
            <person name="Blasco-Zuniga A."/>
            <person name="Proano-Bolanos C."/>
            <person name="Rivera M."/>
            <person name="Meneses L."/>
        </authorList>
    </citation>
    <scope>NUCLEOTIDE SEQUENCE [MRNA]</scope>
    <scope>FUNCTION</scope>
    <scope>SYNTHESIS OF 46-73</scope>
    <scope>IDENTIFICATION BY MASS SPECTROMETRY</scope>
    <scope>SUBCELLULAR LOCATION</scope>
    <scope>3D-STRUCTURE MODELING</scope>
    <source>
        <tissue>Skin secretion</tissue>
    </source>
</reference>
<feature type="signal peptide" evidence="2">
    <location>
        <begin position="1"/>
        <end position="22"/>
    </location>
</feature>
<feature type="propeptide" id="PRO_0000449992" evidence="9">
    <location>
        <begin position="23"/>
        <end position="45"/>
    </location>
</feature>
<feature type="peptide" id="PRO_0000449993" description="Dermaseptin-SP5" evidence="9">
    <location>
        <begin position="46"/>
        <end position="72"/>
    </location>
</feature>
<feature type="propeptide" id="PRO_0000449994" evidence="9">
    <location>
        <begin position="74"/>
        <end position="75"/>
    </location>
</feature>
<feature type="region of interest" description="Disordered" evidence="3">
    <location>
        <begin position="26"/>
        <end position="46"/>
    </location>
</feature>
<feature type="compositionally biased region" description="Acidic residues" evidence="3">
    <location>
        <begin position="30"/>
        <end position="40"/>
    </location>
</feature>
<feature type="modified residue" description="Proline amide" evidence="9">
    <location>
        <position position="72"/>
    </location>
</feature>
<organism>
    <name type="scientific">Agalychnis spurrelli</name>
    <name type="common">Gliding leaf frog</name>
    <name type="synonym">Agalychnis litodryas</name>
    <dbReference type="NCBI Taxonomy" id="317303"/>
    <lineage>
        <taxon>Eukaryota</taxon>
        <taxon>Metazoa</taxon>
        <taxon>Chordata</taxon>
        <taxon>Craniata</taxon>
        <taxon>Vertebrata</taxon>
        <taxon>Euteleostomi</taxon>
        <taxon>Amphibia</taxon>
        <taxon>Batrachia</taxon>
        <taxon>Anura</taxon>
        <taxon>Neobatrachia</taxon>
        <taxon>Hyloidea</taxon>
        <taxon>Hylidae</taxon>
        <taxon>Phyllomedusinae</taxon>
        <taxon>Agalychnis</taxon>
    </lineage>
</organism>
<comment type="function">
    <text evidence="4 5 8">Antimicrobial peptide with weak activity against Gram-positive and Gram-negative bacteria and fungi (PubMed:31422479, PubMed:31671555). Has been tested against E.coli (MIC=96.06-256 uM), S.aureus (MIC&gt;192.12 uM), K.pneumoniae (MIC&gt;189.00 uM) and C.albicans (MIC=384.24-1024 uM) (PubMed:31422479, PubMed:31671555). Probably acts by disturbing membrane functions with its alpha-helical amphipathic structure (Probable). May penetrate bacterial membranes, but stay at the mammalian membrane surface (Probable). Does not show hemolytic activity (PubMed:31671555). Does not interact at all with cardiolipin (Probable).</text>
</comment>
<comment type="subcellular location">
    <subcellularLocation>
        <location evidence="4 5">Secreted</location>
    </subcellularLocation>
    <subcellularLocation>
        <location evidence="1">Target cell membrane</location>
    </subcellularLocation>
</comment>
<comment type="tissue specificity">
    <text evidence="9">Expressed by the skin glands.</text>
</comment>
<comment type="similarity">
    <text evidence="7">Belongs to the frog skin active peptide (FSAP) family. Dermaseptin subfamily.</text>
</comment>
<sequence length="75" mass="8342">MAFLKKSLFLVLFLGLVSLSMCEEEKRENEVEEEQEDDEQSELRRSLRSSIKDMAAAAGRAALNAVNGIVNPGEQ</sequence>